<gene>
    <name type="primary">X</name>
</gene>
<dbReference type="EMBL" id="X69895">
    <property type="protein sequence ID" value="CAA49519.1"/>
    <property type="molecule type" value="Genomic_DNA"/>
</dbReference>
<dbReference type="PIR" id="S31619">
    <property type="entry name" value="S31619"/>
</dbReference>
<dbReference type="SMR" id="P39044"/>
<dbReference type="STRING" id="1421.A2J09_18505"/>
<dbReference type="Gene3D" id="1.10.10.10">
    <property type="entry name" value="Winged helix-like DNA-binding domain superfamily/Winged helix DNA-binding domain"/>
    <property type="match status" value="1"/>
</dbReference>
<dbReference type="InterPro" id="IPR052509">
    <property type="entry name" value="Metal_resp_DNA-bind_regulator"/>
</dbReference>
<dbReference type="InterPro" id="IPR005149">
    <property type="entry name" value="Tscrpt_reg_PadR_N"/>
</dbReference>
<dbReference type="InterPro" id="IPR036388">
    <property type="entry name" value="WH-like_DNA-bd_sf"/>
</dbReference>
<dbReference type="InterPro" id="IPR036390">
    <property type="entry name" value="WH_DNA-bd_sf"/>
</dbReference>
<dbReference type="PANTHER" id="PTHR33169">
    <property type="entry name" value="PADR-FAMILY TRANSCRIPTIONAL REGULATOR"/>
    <property type="match status" value="1"/>
</dbReference>
<dbReference type="PANTHER" id="PTHR33169:SF14">
    <property type="entry name" value="TRANSCRIPTIONAL REGULATOR RV3488"/>
    <property type="match status" value="1"/>
</dbReference>
<dbReference type="Pfam" id="PF03551">
    <property type="entry name" value="PadR"/>
    <property type="match status" value="1"/>
</dbReference>
<dbReference type="SUPFAM" id="SSF46785">
    <property type="entry name" value="Winged helix' DNA-binding domain"/>
    <property type="match status" value="1"/>
</dbReference>
<name>YX_LYSSH</name>
<organism>
    <name type="scientific">Lysinibacillus sphaericus</name>
    <name type="common">Bacillus sphaericus</name>
    <dbReference type="NCBI Taxonomy" id="1421"/>
    <lineage>
        <taxon>Bacteria</taxon>
        <taxon>Bacillati</taxon>
        <taxon>Bacillota</taxon>
        <taxon>Bacilli</taxon>
        <taxon>Bacillales</taxon>
        <taxon>Bacillaceae</taxon>
        <taxon>Lysinibacillus</taxon>
    </lineage>
</organism>
<protein>
    <recommendedName>
        <fullName>Uncharacterized protein X</fullName>
    </recommendedName>
</protein>
<accession>P39044</accession>
<feature type="chain" id="PRO_0000066552" description="Uncharacterized protein X">
    <location>
        <begin position="1"/>
        <end position="109"/>
    </location>
</feature>
<proteinExistence type="predicted"/>
<evidence type="ECO:0000305" key="1"/>
<comment type="caution">
    <text evidence="1">Was originally (Ref.1) incorrectly stated to be similar to the S14P family of ribosomal proteins.</text>
</comment>
<sequence>MVRSDIIRGHLDSIILRLILEKDRYGYEISQEISNRTNNSFQIKEATLYAVFQRLEKKEVIEAYYGDVSDGGKRKYYRITSLGKAYLSELVKEWAEVKEIIDLFMEGLE</sequence>
<reference key="1">
    <citation type="submission" date="1992-12" db="EMBL/GenBank/DDBJ databases">
        <title>Nucleotide sequence of a Bacillus sphaericus NTCC 9602 gene X that encodes a 109 amino acid residue protein having similarity with the ribosomal protein S14 of the Euglena gracilis chloroplasts.</title>
        <authorList>
            <person name="Hourdou M.L."/>
            <person name="Joris B."/>
            <person name="Duez C."/>
            <person name="Vacheron M.J."/>
            <person name="Guinand M."/>
            <person name="Ghuysen J.-M."/>
        </authorList>
    </citation>
    <scope>NUCLEOTIDE SEQUENCE [GENOMIC DNA]</scope>
    <source>
        <strain>DSM 396 / NCTC 9602</strain>
    </source>
</reference>